<organism evidence="9">
    <name type="scientific">Ogataea parapolymorpha (strain ATCC 26012 / BCRC 20466 / JCM 22074 / NRRL Y-7560 / DL-1)</name>
    <name type="common">Yeast</name>
    <name type="synonym">Hansenula polymorpha</name>
    <dbReference type="NCBI Taxonomy" id="871575"/>
    <lineage>
        <taxon>Eukaryota</taxon>
        <taxon>Fungi</taxon>
        <taxon>Dikarya</taxon>
        <taxon>Ascomycota</taxon>
        <taxon>Saccharomycotina</taxon>
        <taxon>Pichiomycetes</taxon>
        <taxon>Pichiales</taxon>
        <taxon>Pichiaceae</taxon>
        <taxon>Ogataea</taxon>
    </lineage>
</organism>
<gene>
    <name evidence="7" type="primary">UBA4</name>
    <name evidence="6" type="synonym">CNX4</name>
    <name evidence="8" type="ORF">HPODL_00948</name>
</gene>
<protein>
    <recommendedName>
        <fullName evidence="7">Adenylyltransferase and sulfurtransferase uba4</fullName>
    </recommendedName>
    <alternativeName>
        <fullName evidence="7">Ubiquitin-like protein activator 4</fullName>
    </alternativeName>
    <domain>
        <recommendedName>
            <fullName evidence="7">Molybdopterin-synthase adenylyltransferase</fullName>
            <ecNumber evidence="1">2.7.7.80</ecNumber>
        </recommendedName>
        <alternativeName>
            <fullName evidence="7">Adenylyltransferase UBA4</fullName>
        </alternativeName>
        <alternativeName>
            <fullName evidence="7">Sulfur carrier protein MOCS2A adenylyltransferase</fullName>
        </alternativeName>
    </domain>
    <domain>
        <recommendedName>
            <fullName evidence="7">Molybdopterin-synthase sulfurtransferase</fullName>
            <ecNumber evidence="1">2.8.1.11</ecNumber>
        </recommendedName>
        <alternativeName>
            <fullName evidence="7">Sulfur carrier protein MOCS2A sulfurtransferase</fullName>
        </alternativeName>
        <alternativeName>
            <fullName evidence="7">Sulfurtransferase UBA4</fullName>
        </alternativeName>
    </domain>
</protein>
<reference evidence="9" key="1">
    <citation type="journal article" date="2013" name="BMC Genomics">
        <title>Genome sequence and analysis of methylotrophic yeast Hansenula polymorpha DL1.</title>
        <authorList>
            <person name="Ravin N.V."/>
            <person name="Eldarov M.A."/>
            <person name="Kadnikov V.V."/>
            <person name="Beletsky A.V."/>
            <person name="Schneider J."/>
            <person name="Mardanova E.S."/>
            <person name="Smekalova E.M."/>
            <person name="Zvereva M.I."/>
            <person name="Dontsova O.A."/>
            <person name="Mardanov A.V."/>
            <person name="Skryabin K.G."/>
        </authorList>
    </citation>
    <scope>NUCLEOTIDE SEQUENCE [LARGE SCALE GENOMIC DNA]</scope>
    <source>
        <strain evidence="9">ATCC 26012 / BCRC 20466 / JCM 22074 / NRRL Y-7560 / DL-1</strain>
    </source>
</reference>
<reference evidence="7" key="2">
    <citation type="journal article" date="2021" name="Metab. Eng.">
        <title>Engineering heterologous molybdenum-cofactor-biosynthesis and nitrate-assimilation pathways enables nitrate utilization by Saccharomyces cerevisiae.</title>
        <authorList>
            <person name="Perli T."/>
            <person name="van der Vorm D.N.A."/>
            <person name="Wassink M."/>
            <person name="van den Broek M."/>
            <person name="Pronk J.T."/>
            <person name="Daran J.M."/>
        </authorList>
    </citation>
    <scope>FUNCTION</scope>
    <scope>PATHWAY</scope>
</reference>
<sequence>MSLSLNEYLRYGRQLIVPEFGLQGQISLKNSRVLVVGAGGLGCPALQYLVGAGFGTVGIVDHDTVDISNLHRQILHTSETVEMLKCESAKLQLAKLNPLVQINTHPVALSPDNSFGIFEQYDIILDCTDTPATRYLINDTAVLLGLTVISGSGLKTEGQLSILNFNNTGPCYRCFYPTPPPPSSVTACSDGGVLGPVIGIMGVMMALEAIKVVSGYYLREDVEFQPFLSLYSGYGPLQSLRTFKMRRRSPKCRVCNAGTREITRHVIETELDYAVWCGKMDYNVLEKDERVSVEQLSAQRAPYLVDVRAKEQYSIVHLPNSINIPLNALKHMDTLDVPKETMIYVICRFGNDSQLAVKHLKSIGYENCVDVIGGLTQWSRQIDPNFPIY</sequence>
<dbReference type="EC" id="2.7.7.80" evidence="1"/>
<dbReference type="EC" id="2.8.1.11" evidence="1"/>
<dbReference type="EMBL" id="AEOI02000006">
    <property type="protein sequence ID" value="ESX00063.1"/>
    <property type="molecule type" value="Genomic_DNA"/>
</dbReference>
<dbReference type="RefSeq" id="XP_013934869.1">
    <property type="nucleotide sequence ID" value="XM_014079394.1"/>
</dbReference>
<dbReference type="STRING" id="871575.W1QET1"/>
<dbReference type="GeneID" id="25770415"/>
<dbReference type="KEGG" id="opa:HPODL_00948"/>
<dbReference type="eggNOG" id="KOG2017">
    <property type="taxonomic scope" value="Eukaryota"/>
</dbReference>
<dbReference type="HOGENOM" id="CLU_013325_1_2_1"/>
<dbReference type="OMA" id="IPDVGMD"/>
<dbReference type="OrthoDB" id="10261062at2759"/>
<dbReference type="UniPathway" id="UPA00344"/>
<dbReference type="UniPathway" id="UPA00988"/>
<dbReference type="Proteomes" id="UP000008673">
    <property type="component" value="Chromosome IV"/>
</dbReference>
<dbReference type="GO" id="GO:0005829">
    <property type="term" value="C:cytosol"/>
    <property type="evidence" value="ECO:0007669"/>
    <property type="project" value="InterPro"/>
</dbReference>
<dbReference type="GO" id="GO:0070566">
    <property type="term" value="F:adenylyltransferase activity"/>
    <property type="evidence" value="ECO:0007669"/>
    <property type="project" value="InterPro"/>
</dbReference>
<dbReference type="GO" id="GO:0005524">
    <property type="term" value="F:ATP binding"/>
    <property type="evidence" value="ECO:0007669"/>
    <property type="project" value="UniProtKB-KW"/>
</dbReference>
<dbReference type="GO" id="GO:0046872">
    <property type="term" value="F:metal ion binding"/>
    <property type="evidence" value="ECO:0007669"/>
    <property type="project" value="UniProtKB-KW"/>
</dbReference>
<dbReference type="GO" id="GO:0004792">
    <property type="term" value="F:thiosulfate-cyanide sulfurtransferase activity"/>
    <property type="evidence" value="ECO:0007669"/>
    <property type="project" value="TreeGrafter"/>
</dbReference>
<dbReference type="GO" id="GO:0042292">
    <property type="term" value="F:URM1 activating enzyme activity"/>
    <property type="evidence" value="ECO:0007669"/>
    <property type="project" value="TreeGrafter"/>
</dbReference>
<dbReference type="GO" id="GO:0032447">
    <property type="term" value="P:protein urmylation"/>
    <property type="evidence" value="ECO:0007669"/>
    <property type="project" value="TreeGrafter"/>
</dbReference>
<dbReference type="GO" id="GO:0002143">
    <property type="term" value="P:tRNA wobble position uridine thiolation"/>
    <property type="evidence" value="ECO:0007669"/>
    <property type="project" value="InterPro"/>
</dbReference>
<dbReference type="CDD" id="cd00757">
    <property type="entry name" value="ThiF_MoeB_HesA_family"/>
    <property type="match status" value="1"/>
</dbReference>
<dbReference type="FunFam" id="3.40.50.720:FF:000033">
    <property type="entry name" value="Adenylyltransferase and sulfurtransferase MOCS3"/>
    <property type="match status" value="1"/>
</dbReference>
<dbReference type="Gene3D" id="3.40.50.720">
    <property type="entry name" value="NAD(P)-binding Rossmann-like Domain"/>
    <property type="match status" value="1"/>
</dbReference>
<dbReference type="Gene3D" id="3.40.250.10">
    <property type="entry name" value="Rhodanese-like domain"/>
    <property type="match status" value="1"/>
</dbReference>
<dbReference type="HAMAP" id="MF_03049">
    <property type="entry name" value="MOCS3_Uba4"/>
    <property type="match status" value="1"/>
</dbReference>
<dbReference type="InterPro" id="IPR028885">
    <property type="entry name" value="MOCS3/Uba4"/>
</dbReference>
<dbReference type="InterPro" id="IPR001763">
    <property type="entry name" value="Rhodanese-like_dom"/>
</dbReference>
<dbReference type="InterPro" id="IPR036873">
    <property type="entry name" value="Rhodanese-like_dom_sf"/>
</dbReference>
<dbReference type="InterPro" id="IPR045886">
    <property type="entry name" value="ThiF/MoeB/HesA"/>
</dbReference>
<dbReference type="InterPro" id="IPR000594">
    <property type="entry name" value="ThiF_NAD_FAD-bd"/>
</dbReference>
<dbReference type="InterPro" id="IPR035985">
    <property type="entry name" value="Ubiquitin-activating_enz"/>
</dbReference>
<dbReference type="PANTHER" id="PTHR10953:SF102">
    <property type="entry name" value="ADENYLYLTRANSFERASE AND SULFURTRANSFERASE MOCS3"/>
    <property type="match status" value="1"/>
</dbReference>
<dbReference type="PANTHER" id="PTHR10953">
    <property type="entry name" value="UBIQUITIN-ACTIVATING ENZYME E1"/>
    <property type="match status" value="1"/>
</dbReference>
<dbReference type="Pfam" id="PF00581">
    <property type="entry name" value="Rhodanese"/>
    <property type="match status" value="1"/>
</dbReference>
<dbReference type="Pfam" id="PF00899">
    <property type="entry name" value="ThiF"/>
    <property type="match status" value="1"/>
</dbReference>
<dbReference type="SMART" id="SM00450">
    <property type="entry name" value="RHOD"/>
    <property type="match status" value="1"/>
</dbReference>
<dbReference type="SUPFAM" id="SSF69572">
    <property type="entry name" value="Activating enzymes of the ubiquitin-like proteins"/>
    <property type="match status" value="1"/>
</dbReference>
<dbReference type="PROSITE" id="PS50206">
    <property type="entry name" value="RHODANESE_3"/>
    <property type="match status" value="1"/>
</dbReference>
<accession>W1QET1</accession>
<feature type="chain" id="PRO_0000462530" description="Adenylyltransferase and sulfurtransferase uba4">
    <location>
        <begin position="1"/>
        <end position="389"/>
    </location>
</feature>
<feature type="domain" description="Rhodanese" evidence="4">
    <location>
        <begin position="298"/>
        <end position="387"/>
    </location>
</feature>
<feature type="active site" description="Glycyl thioester intermediate; for adenylyltransferase activity" evidence="3">
    <location>
        <position position="188"/>
    </location>
</feature>
<feature type="active site" description="Cysteine persulfide intermediate" evidence="4">
    <location>
        <position position="347"/>
    </location>
</feature>
<feature type="binding site" evidence="3">
    <location>
        <position position="40"/>
    </location>
    <ligand>
        <name>ATP</name>
        <dbReference type="ChEBI" id="CHEBI:30616"/>
    </ligand>
</feature>
<feature type="binding site" evidence="3">
    <location>
        <position position="61"/>
    </location>
    <ligand>
        <name>ATP</name>
        <dbReference type="ChEBI" id="CHEBI:30616"/>
    </ligand>
</feature>
<feature type="binding site" evidence="3">
    <location>
        <begin position="68"/>
        <end position="72"/>
    </location>
    <ligand>
        <name>ATP</name>
        <dbReference type="ChEBI" id="CHEBI:30616"/>
    </ligand>
</feature>
<feature type="binding site" evidence="3">
    <location>
        <position position="85"/>
    </location>
    <ligand>
        <name>ATP</name>
        <dbReference type="ChEBI" id="CHEBI:30616"/>
    </ligand>
</feature>
<feature type="binding site" evidence="3">
    <location>
        <begin position="129"/>
        <end position="130"/>
    </location>
    <ligand>
        <name>ATP</name>
        <dbReference type="ChEBI" id="CHEBI:30616"/>
    </ligand>
</feature>
<feature type="binding site" evidence="3">
    <location>
        <position position="171"/>
    </location>
    <ligand>
        <name>Zn(2+)</name>
        <dbReference type="ChEBI" id="CHEBI:29105"/>
    </ligand>
</feature>
<feature type="binding site" evidence="3">
    <location>
        <position position="174"/>
    </location>
    <ligand>
        <name>Zn(2+)</name>
        <dbReference type="ChEBI" id="CHEBI:29105"/>
    </ligand>
</feature>
<feature type="binding site" evidence="3">
    <location>
        <position position="252"/>
    </location>
    <ligand>
        <name>Zn(2+)</name>
        <dbReference type="ChEBI" id="CHEBI:29105"/>
    </ligand>
</feature>
<feature type="binding site" evidence="3">
    <location>
        <position position="255"/>
    </location>
    <ligand>
        <name>Zn(2+)</name>
        <dbReference type="ChEBI" id="CHEBI:29105"/>
    </ligand>
</feature>
<keyword id="KW-0067">ATP-binding</keyword>
<keyword id="KW-0963">Cytoplasm</keyword>
<keyword id="KW-0479">Metal-binding</keyword>
<keyword id="KW-0501">Molybdenum cofactor biosynthesis</keyword>
<keyword id="KW-0511">Multifunctional enzyme</keyword>
<keyword id="KW-0547">Nucleotide-binding</keyword>
<keyword id="KW-0548">Nucleotidyltransferase</keyword>
<keyword id="KW-1185">Reference proteome</keyword>
<keyword id="KW-0808">Transferase</keyword>
<keyword id="KW-0819">tRNA processing</keyword>
<keyword id="KW-0833">Ubl conjugation pathway</keyword>
<keyword id="KW-0862">Zinc</keyword>
<comment type="function">
    <text evidence="1 5">Plays a central role in 2-thiolation of mcm(5)S(2)U at tRNA wobble positions of cytosolic tRNA(Lys), tRNA(Glu) and tRNA(Gln) (By similarity). Also essential during biosynthesis of the molybdenum cofactor (PubMed:33617956). Acts by mediating the C-terminal thiocarboxylation of sulfur carriers URM1 and CNX5/MOCS2A. Its N-terminus first activates urm1 and mocs2a as acyl-adenylates (-COAMP), then the persulfide sulfur on the catalytic cysteine is transferred to URM1 and CNX5/MOCS2A to form thiocarboxylation (-COSH) of their C-terminus. The reaction probably involves hydrogen sulfide that is generated from the persulfide intermediate and that acts as a nucleophile towards URM1 and CNX5/MOCS2A. Subsequently, a transient disulfide bond is formed. Does not use thiosulfate as sulfur donor; NFS1 probably acting as a sulfur donor for thiocarboxylation reactions (By similarity). Required for growth on nitrate as a sole nitrogen source (PubMed:33617956).</text>
</comment>
<comment type="catalytic activity">
    <reaction evidence="1">
        <text>[molybdopterin-synthase sulfur-carrier protein]-C-terminal Gly-Gly + ATP + H(+) = [molybdopterin-synthase sulfur-carrier protein]-C-terminal Gly-Gly-AMP + diphosphate</text>
        <dbReference type="Rhea" id="RHEA:43616"/>
        <dbReference type="Rhea" id="RHEA-COMP:12159"/>
        <dbReference type="Rhea" id="RHEA-COMP:12202"/>
        <dbReference type="ChEBI" id="CHEBI:15378"/>
        <dbReference type="ChEBI" id="CHEBI:30616"/>
        <dbReference type="ChEBI" id="CHEBI:33019"/>
        <dbReference type="ChEBI" id="CHEBI:90618"/>
        <dbReference type="ChEBI" id="CHEBI:90778"/>
        <dbReference type="EC" id="2.7.7.80"/>
    </reaction>
</comment>
<comment type="catalytic activity">
    <reaction evidence="1">
        <text>[molybdopterin-synthase sulfur-carrier protein]-C-terminal Gly-Gly-AMP + S-sulfanyl-L-cysteinyl-[cysteine desulfurase] + AH2 = [molybdopterin-synthase sulfur-carrier protein]-C-terminal-Gly-aminoethanethioate + L-cysteinyl-[cysteine desulfurase] + A + AMP + 2 H(+)</text>
        <dbReference type="Rhea" id="RHEA:48612"/>
        <dbReference type="Rhea" id="RHEA-COMP:12157"/>
        <dbReference type="Rhea" id="RHEA-COMP:12158"/>
        <dbReference type="Rhea" id="RHEA-COMP:12159"/>
        <dbReference type="Rhea" id="RHEA-COMP:19907"/>
        <dbReference type="ChEBI" id="CHEBI:13193"/>
        <dbReference type="ChEBI" id="CHEBI:15378"/>
        <dbReference type="ChEBI" id="CHEBI:17499"/>
        <dbReference type="ChEBI" id="CHEBI:29950"/>
        <dbReference type="ChEBI" id="CHEBI:61963"/>
        <dbReference type="ChEBI" id="CHEBI:90618"/>
        <dbReference type="ChEBI" id="CHEBI:232372"/>
        <dbReference type="ChEBI" id="CHEBI:456215"/>
        <dbReference type="EC" id="2.8.1.11"/>
    </reaction>
</comment>
<comment type="cofactor">
    <cofactor evidence="3">
        <name>Zn(2+)</name>
        <dbReference type="ChEBI" id="CHEBI:29105"/>
    </cofactor>
    <text evidence="3">Binds 1 zinc ion per subunit.</text>
</comment>
<comment type="pathway">
    <text evidence="7">tRNA modification; 5-methoxycarbonylmethyl-2-thiouridine-tRNA biosynthesis.</text>
</comment>
<comment type="pathway">
    <text evidence="5">Cofactor biosynthesis; molybdopterin biosynthesis.</text>
</comment>
<comment type="subcellular location">
    <subcellularLocation>
        <location evidence="2">Cytoplasm</location>
        <location evidence="2">Cytosol</location>
    </subcellularLocation>
</comment>
<comment type="similarity">
    <text evidence="7">In the N-terminal section; belongs to the HesA/MoeB/ThiF family. UBA4 subfamily.</text>
</comment>
<name>UBA4_OGAPD</name>
<evidence type="ECO:0000250" key="1">
    <source>
        <dbReference type="UniProtKB" id="O95396"/>
    </source>
</evidence>
<evidence type="ECO:0000250" key="2">
    <source>
        <dbReference type="UniProtKB" id="P38820"/>
    </source>
</evidence>
<evidence type="ECO:0000255" key="3">
    <source>
        <dbReference type="HAMAP-Rule" id="MF_03049"/>
    </source>
</evidence>
<evidence type="ECO:0000255" key="4">
    <source>
        <dbReference type="PROSITE-ProRule" id="PRU00173"/>
    </source>
</evidence>
<evidence type="ECO:0000269" key="5">
    <source>
    </source>
</evidence>
<evidence type="ECO:0000303" key="6">
    <source>
    </source>
</evidence>
<evidence type="ECO:0000305" key="7"/>
<evidence type="ECO:0000312" key="8">
    <source>
        <dbReference type="EMBL" id="ESX00063.1"/>
    </source>
</evidence>
<evidence type="ECO:0000312" key="9">
    <source>
        <dbReference type="Proteomes" id="UP000008673"/>
    </source>
</evidence>
<proteinExistence type="inferred from homology"/>